<reference key="1">
    <citation type="journal article" date="1999" name="Nature">
        <title>Evidence for lateral gene transfer between Archaea and Bacteria from genome sequence of Thermotoga maritima.</title>
        <authorList>
            <person name="Nelson K.E."/>
            <person name="Clayton R.A."/>
            <person name="Gill S.R."/>
            <person name="Gwinn M.L."/>
            <person name="Dodson R.J."/>
            <person name="Haft D.H."/>
            <person name="Hickey E.K."/>
            <person name="Peterson J.D."/>
            <person name="Nelson W.C."/>
            <person name="Ketchum K.A."/>
            <person name="McDonald L.A."/>
            <person name="Utterback T.R."/>
            <person name="Malek J.A."/>
            <person name="Linher K.D."/>
            <person name="Garrett M.M."/>
            <person name="Stewart A.M."/>
            <person name="Cotton M.D."/>
            <person name="Pratt M.S."/>
            <person name="Phillips C.A."/>
            <person name="Richardson D.L."/>
            <person name="Heidelberg J.F."/>
            <person name="Sutton G.G."/>
            <person name="Fleischmann R.D."/>
            <person name="Eisen J.A."/>
            <person name="White O."/>
            <person name="Salzberg S.L."/>
            <person name="Smith H.O."/>
            <person name="Venter J.C."/>
            <person name="Fraser C.M."/>
        </authorList>
    </citation>
    <scope>NUCLEOTIDE SEQUENCE [LARGE SCALE GENOMIC DNA]</scope>
    <source>
        <strain>ATCC 43589 / DSM 3109 / JCM 10099 / NBRC 100826 / MSB8</strain>
    </source>
</reference>
<accession>Q9X1R5</accession>
<proteinExistence type="inferred from homology"/>
<organism>
    <name type="scientific">Thermotoga maritima (strain ATCC 43589 / DSM 3109 / JCM 10099 / NBRC 100826 / MSB8)</name>
    <dbReference type="NCBI Taxonomy" id="243274"/>
    <lineage>
        <taxon>Bacteria</taxon>
        <taxon>Thermotogati</taxon>
        <taxon>Thermotogota</taxon>
        <taxon>Thermotogae</taxon>
        <taxon>Thermotogales</taxon>
        <taxon>Thermotogaceae</taxon>
        <taxon>Thermotoga</taxon>
    </lineage>
</organism>
<dbReference type="EMBL" id="AE000512">
    <property type="protein sequence ID" value="AAD36646.1"/>
    <property type="molecule type" value="Genomic_DNA"/>
</dbReference>
<dbReference type="PIR" id="D72238">
    <property type="entry name" value="D72238"/>
</dbReference>
<dbReference type="RefSeq" id="NP_229379.1">
    <property type="nucleotide sequence ID" value="NC_000853.1"/>
</dbReference>
<dbReference type="SMR" id="Q9X1R5"/>
<dbReference type="FunCoup" id="Q9X1R5">
    <property type="interactions" value="344"/>
</dbReference>
<dbReference type="STRING" id="243274.TM_1579"/>
<dbReference type="PaxDb" id="243274-THEMA_06385"/>
<dbReference type="EnsemblBacteria" id="AAD36646">
    <property type="protein sequence ID" value="AAD36646"/>
    <property type="gene ID" value="TM_1579"/>
</dbReference>
<dbReference type="KEGG" id="tma:TM1579"/>
<dbReference type="PATRIC" id="fig|243274.5.peg.1598"/>
<dbReference type="eggNOG" id="COG1186">
    <property type="taxonomic scope" value="Bacteria"/>
</dbReference>
<dbReference type="InParanoid" id="Q9X1R5"/>
<dbReference type="OrthoDB" id="9806673at2"/>
<dbReference type="Proteomes" id="UP000008183">
    <property type="component" value="Chromosome"/>
</dbReference>
<dbReference type="GO" id="GO:0005737">
    <property type="term" value="C:cytoplasm"/>
    <property type="evidence" value="ECO:0007669"/>
    <property type="project" value="UniProtKB-SubCell"/>
</dbReference>
<dbReference type="GO" id="GO:0016149">
    <property type="term" value="F:translation release factor activity, codon specific"/>
    <property type="evidence" value="ECO:0007669"/>
    <property type="project" value="UniProtKB-UniRule"/>
</dbReference>
<dbReference type="FunFam" id="3.30.160.20:FF:000010">
    <property type="entry name" value="Peptide chain release factor 2"/>
    <property type="match status" value="1"/>
</dbReference>
<dbReference type="Gene3D" id="3.30.160.20">
    <property type="match status" value="1"/>
</dbReference>
<dbReference type="Gene3D" id="3.30.70.1660">
    <property type="match status" value="1"/>
</dbReference>
<dbReference type="Gene3D" id="1.20.58.410">
    <property type="entry name" value="Release factor"/>
    <property type="match status" value="1"/>
</dbReference>
<dbReference type="HAMAP" id="MF_00094">
    <property type="entry name" value="Rel_fac_2"/>
    <property type="match status" value="1"/>
</dbReference>
<dbReference type="InterPro" id="IPR005139">
    <property type="entry name" value="PCRF"/>
</dbReference>
<dbReference type="InterPro" id="IPR000352">
    <property type="entry name" value="Pep_chain_release_fac_I"/>
</dbReference>
<dbReference type="InterPro" id="IPR045853">
    <property type="entry name" value="Pep_chain_release_fac_I_sf"/>
</dbReference>
<dbReference type="InterPro" id="IPR004374">
    <property type="entry name" value="PrfB"/>
</dbReference>
<dbReference type="NCBIfam" id="TIGR00020">
    <property type="entry name" value="prfB"/>
    <property type="match status" value="1"/>
</dbReference>
<dbReference type="PANTHER" id="PTHR43116:SF3">
    <property type="entry name" value="CLASS I PEPTIDE CHAIN RELEASE FACTOR"/>
    <property type="match status" value="1"/>
</dbReference>
<dbReference type="PANTHER" id="PTHR43116">
    <property type="entry name" value="PEPTIDE CHAIN RELEASE FACTOR 2"/>
    <property type="match status" value="1"/>
</dbReference>
<dbReference type="Pfam" id="PF03462">
    <property type="entry name" value="PCRF"/>
    <property type="match status" value="1"/>
</dbReference>
<dbReference type="Pfam" id="PF00472">
    <property type="entry name" value="RF-1"/>
    <property type="match status" value="1"/>
</dbReference>
<dbReference type="SMART" id="SM00937">
    <property type="entry name" value="PCRF"/>
    <property type="match status" value="1"/>
</dbReference>
<dbReference type="SUPFAM" id="SSF75620">
    <property type="entry name" value="Release factor"/>
    <property type="match status" value="1"/>
</dbReference>
<dbReference type="PROSITE" id="PS00745">
    <property type="entry name" value="RF_PROK_I"/>
    <property type="match status" value="1"/>
</dbReference>
<sequence>MGMISFETKTKIEELEKKYKDVLSVVNEDEINKELEEVEKKLTDPSVWDDQKKAREYTQKLKRLKNISEDLKRVRSLFEDLEVAIELSDEDQEMAQHVEEIVQELEGAVKKLELEIILNGKYDPNNAYLSVHPGAGGTESQDWAQMLLRMYMRWAERKGFDVEIVEFQPGEEAGIKDATILIKGEYAYGYLKHESGVHRLVRISPFDAARRRHTSFASVNVIPEIDDDVDIEIRPEDLKIETFRASGHGGQYVNKTESAVRITHLPTGIVVSCQNERSQHQNKQTALKILKAKLYQLEMEKKRREIQEIQGELKDISWGNQIRSYIFHPYTMVKDHRTGVETANVDAVMDGDIDMFIEAELVYFARRSS</sequence>
<name>RF2_THEMA</name>
<gene>
    <name type="primary">prfB</name>
    <name type="ordered locus">TM_1579</name>
</gene>
<keyword id="KW-0963">Cytoplasm</keyword>
<keyword id="KW-0488">Methylation</keyword>
<keyword id="KW-0648">Protein biosynthesis</keyword>
<keyword id="KW-1185">Reference proteome</keyword>
<comment type="function">
    <text evidence="1">Peptide chain release factor 2 directs the termination of translation in response to the peptide chain termination codons UGA and UAA.</text>
</comment>
<comment type="subcellular location">
    <subcellularLocation>
        <location evidence="1">Cytoplasm</location>
    </subcellularLocation>
</comment>
<comment type="PTM">
    <text evidence="1">Methylated by PrmC. Methylation increases the termination efficiency of RF2 (By similarity).</text>
</comment>
<comment type="similarity">
    <text evidence="2">Belongs to the prokaryotic/mitochondrial release factor family.</text>
</comment>
<protein>
    <recommendedName>
        <fullName>Peptide chain release factor 2</fullName>
        <shortName>RF-2</shortName>
    </recommendedName>
</protein>
<feature type="chain" id="PRO_0000166854" description="Peptide chain release factor 2">
    <location>
        <begin position="1"/>
        <end position="369"/>
    </location>
</feature>
<feature type="modified residue" description="N5-methylglutamine" evidence="1">
    <location>
        <position position="251"/>
    </location>
</feature>
<evidence type="ECO:0000250" key="1"/>
<evidence type="ECO:0000305" key="2"/>